<feature type="chain" id="PRO_0000048008" description="DNA-directed RNA polymerase subunit beta">
    <location>
        <begin position="1"/>
        <end position="1071"/>
    </location>
</feature>
<proteinExistence type="evidence at transcript level"/>
<accession>Q85FM7</accession>
<keyword id="KW-0150">Chloroplast</keyword>
<keyword id="KW-0240">DNA-directed RNA polymerase</keyword>
<keyword id="KW-0548">Nucleotidyltransferase</keyword>
<keyword id="KW-0934">Plastid</keyword>
<keyword id="KW-0691">RNA editing</keyword>
<keyword id="KW-0804">Transcription</keyword>
<keyword id="KW-0808">Transferase</keyword>
<name>RPOB_ADICA</name>
<organism>
    <name type="scientific">Adiantum capillus-veneris</name>
    <name type="common">Maidenhair fern</name>
    <dbReference type="NCBI Taxonomy" id="13818"/>
    <lineage>
        <taxon>Eukaryota</taxon>
        <taxon>Viridiplantae</taxon>
        <taxon>Streptophyta</taxon>
        <taxon>Embryophyta</taxon>
        <taxon>Tracheophyta</taxon>
        <taxon>Polypodiopsida</taxon>
        <taxon>Polypodiidae</taxon>
        <taxon>Polypodiales</taxon>
        <taxon>Pteridineae</taxon>
        <taxon>Pteridaceae</taxon>
        <taxon>Vittarioideae</taxon>
        <taxon>Adiantum</taxon>
    </lineage>
</organism>
<sequence length="1071" mass="120827">MPVLPELAQIQFKGFSRFVHQKLLKELENFPKIEDTDKEVEFRSIGNQYQLTEPSLEERDAAYQCITYSADLYVPAQLICKEDQIVQEEDVRLGSIPWMNSGGTFIINGIARVLVSQILRSPGIYYNRESDQRGILAYTSTVISDQGGRFKLEIDGRNRIWVRISKKKKISIFILLVAMGLCKRDILQNSRYPRIFSNMFKRQKESIESPEDAIVELYKHLYSATDADVFFSESIFRELQKRFFQHRCELGRIGRRNLNIKLTLDVPETESFLLPQDILAAADHLVEISYGEGKLDDIDHLKNRRVRSVADLLQEQLKLALNRLENLIRQNLSRAVRRKRAITPRGLVTPVPVIAAFKEFFGSHPLSQFLDQTNPLSEMVHKRRLSSVGPGGLTRRTASFQARDIHFSHYGRICPIETSEGMNAGLISSLAIQAGVNTSGSLGSPYLEMSDSSGEEQLVNLSPAEDDYYRVASENLLLSEWRGSEKEIIPVRYQQEFLSVLWEQVDFRSIHPLHHFSIGASLIPFIEHNDANRALMGSTMQRQAVPLIKPERCIVGTGLESQVALDSGSVAISEQDGKVCYIDGNRIELSLIHEAKKNKLAQPTTIEELKIFERSNNNTCMHQKPAVSLGELLRGGEIVADGAATVRGELALGKNILVAYMPWEGYNFEDAVLISERLIYEDIFTSLHIEKHEVEICATNQGPERVTKQISQLDGYLLRHLDDDGLVELGSWVEAGDVLVGKLTPQEGASSSRVPEGRLLQAIFGIQLVNARESCLRVPIGGRGRVIDVRWVYPEDDATNDLEVIHIYILQRRKIQVGDKIAGRHGNKGIVSKIVPRQDMPYLQNGTPVDMILSPLGVPSRMNVGQIFECLLGLAGEFLETHYRVVPFDERYEREASRKLVFAELHEAGARTNNPWLFEPSHPGKSRLIDGRTGDPFGQSITTGKAYIMKLIHQVDDKIHARSSGPYALVTQQPLKGKSRRGGQRIGEMEVWALEGFGVSYTLQEMLTTKSDHIQARYKALSAIMTGKPVCKPKTVPESFRLLVRELRCMGLNLERNFISEEDLGREFENI</sequence>
<comment type="function">
    <text evidence="1">DNA-dependent RNA polymerase catalyzes the transcription of DNA into RNA using the four ribonucleoside triphosphates as substrates.</text>
</comment>
<comment type="catalytic activity">
    <reaction evidence="1">
        <text>RNA(n) + a ribonucleoside 5'-triphosphate = RNA(n+1) + diphosphate</text>
        <dbReference type="Rhea" id="RHEA:21248"/>
        <dbReference type="Rhea" id="RHEA-COMP:14527"/>
        <dbReference type="Rhea" id="RHEA-COMP:17342"/>
        <dbReference type="ChEBI" id="CHEBI:33019"/>
        <dbReference type="ChEBI" id="CHEBI:61557"/>
        <dbReference type="ChEBI" id="CHEBI:140395"/>
        <dbReference type="EC" id="2.7.7.6"/>
    </reaction>
</comment>
<comment type="subunit">
    <text evidence="1">In plastids the minimal PEP RNA polymerase catalytic core is composed of four subunits: alpha, beta, beta', and beta''. When a (nuclear-encoded) sigma factor is associated with the core the holoenzyme is formed, which can initiate transcription.</text>
</comment>
<comment type="subcellular location">
    <subcellularLocation>
        <location>Plastid</location>
        <location>Chloroplast</location>
    </subcellularLocation>
</comment>
<comment type="RNA editing">
    <location>
        <position position="43" evidence="2"/>
    </location>
    <location>
        <position position="72" evidence="2"/>
    </location>
    <location>
        <position position="77" evidence="2"/>
    </location>
    <location>
        <position position="142" evidence="2"/>
    </location>
    <location>
        <position position="215" evidence="2"/>
    </location>
    <location>
        <position position="240" evidence="2"/>
    </location>
    <location>
        <position position="285" evidence="2"/>
    </location>
    <location>
        <position position="321" evidence="2"/>
    </location>
    <location>
        <position position="330" evidence="2"/>
    </location>
    <location>
        <position position="540" evidence="2"/>
    </location>
    <location>
        <position position="729" evidence="2"/>
    </location>
    <location>
        <position position="759" evidence="2"/>
    </location>
    <location>
        <position position="787" evidence="2"/>
    </location>
    <location>
        <position position="879" evidence="2"/>
    </location>
    <location>
        <position position="905" evidence="2"/>
    </location>
    <location>
        <position position="994" evidence="2"/>
    </location>
    <location>
        <position position="1049" evidence="2"/>
    </location>
    <location>
        <position position="1060" evidence="2"/>
    </location>
    <text>The nonsense codons at positions 43, 77, 240 and 330 are modified to sense codons.</text>
</comment>
<comment type="similarity">
    <text evidence="1">Belongs to the RNA polymerase beta chain family.</text>
</comment>
<protein>
    <recommendedName>
        <fullName evidence="1">DNA-directed RNA polymerase subunit beta</fullName>
        <ecNumber evidence="1">2.7.7.6</ecNumber>
    </recommendedName>
    <alternativeName>
        <fullName evidence="1">PEP</fullName>
    </alternativeName>
    <alternativeName>
        <fullName evidence="1">Plastid-encoded RNA polymerase subunit beta</fullName>
        <shortName evidence="1">RNA polymerase subunit beta</shortName>
    </alternativeName>
</protein>
<geneLocation type="chloroplast"/>
<evidence type="ECO:0000255" key="1">
    <source>
        <dbReference type="HAMAP-Rule" id="MF_01321"/>
    </source>
</evidence>
<evidence type="ECO:0000269" key="2">
    <source>
    </source>
</evidence>
<dbReference type="EC" id="2.7.7.6" evidence="1"/>
<dbReference type="EMBL" id="AY178864">
    <property type="protein sequence ID" value="AAP29384.3"/>
    <property type="molecule type" value="Genomic_DNA"/>
</dbReference>
<dbReference type="RefSeq" id="NP_848052.1">
    <property type="nucleotide sequence ID" value="NC_004766.1"/>
</dbReference>
<dbReference type="SMR" id="Q85FM7"/>
<dbReference type="GeneID" id="807460"/>
<dbReference type="GO" id="GO:0009507">
    <property type="term" value="C:chloroplast"/>
    <property type="evidence" value="ECO:0007669"/>
    <property type="project" value="UniProtKB-SubCell"/>
</dbReference>
<dbReference type="GO" id="GO:0000428">
    <property type="term" value="C:DNA-directed RNA polymerase complex"/>
    <property type="evidence" value="ECO:0007669"/>
    <property type="project" value="UniProtKB-KW"/>
</dbReference>
<dbReference type="GO" id="GO:0005739">
    <property type="term" value="C:mitochondrion"/>
    <property type="evidence" value="ECO:0007669"/>
    <property type="project" value="GOC"/>
</dbReference>
<dbReference type="GO" id="GO:0003677">
    <property type="term" value="F:DNA binding"/>
    <property type="evidence" value="ECO:0007669"/>
    <property type="project" value="UniProtKB-UniRule"/>
</dbReference>
<dbReference type="GO" id="GO:0003899">
    <property type="term" value="F:DNA-directed RNA polymerase activity"/>
    <property type="evidence" value="ECO:0007669"/>
    <property type="project" value="UniProtKB-UniRule"/>
</dbReference>
<dbReference type="GO" id="GO:0032549">
    <property type="term" value="F:ribonucleoside binding"/>
    <property type="evidence" value="ECO:0007669"/>
    <property type="project" value="InterPro"/>
</dbReference>
<dbReference type="GO" id="GO:0006351">
    <property type="term" value="P:DNA-templated transcription"/>
    <property type="evidence" value="ECO:0007669"/>
    <property type="project" value="UniProtKB-UniRule"/>
</dbReference>
<dbReference type="CDD" id="cd00653">
    <property type="entry name" value="RNA_pol_B_RPB2"/>
    <property type="match status" value="1"/>
</dbReference>
<dbReference type="Gene3D" id="2.40.50.100">
    <property type="match status" value="1"/>
</dbReference>
<dbReference type="Gene3D" id="2.40.50.150">
    <property type="match status" value="1"/>
</dbReference>
<dbReference type="Gene3D" id="3.90.1100.10">
    <property type="match status" value="1"/>
</dbReference>
<dbReference type="Gene3D" id="2.30.150.10">
    <property type="entry name" value="DNA-directed RNA polymerase, beta subunit, external 1 domain"/>
    <property type="match status" value="1"/>
</dbReference>
<dbReference type="Gene3D" id="2.40.270.10">
    <property type="entry name" value="DNA-directed RNA polymerase, subunit 2, domain 6"/>
    <property type="match status" value="1"/>
</dbReference>
<dbReference type="Gene3D" id="3.90.1800.10">
    <property type="entry name" value="RNA polymerase alpha subunit dimerisation domain"/>
    <property type="match status" value="1"/>
</dbReference>
<dbReference type="Gene3D" id="3.90.1110.10">
    <property type="entry name" value="RNA polymerase Rpb2, domain 2"/>
    <property type="match status" value="1"/>
</dbReference>
<dbReference type="HAMAP" id="MF_01321">
    <property type="entry name" value="RNApol_bact_RpoB"/>
    <property type="match status" value="1"/>
</dbReference>
<dbReference type="InterPro" id="IPR042107">
    <property type="entry name" value="DNA-dir_RNA_pol_bsu_ext_1_sf"/>
</dbReference>
<dbReference type="InterPro" id="IPR015712">
    <property type="entry name" value="DNA-dir_RNA_pol_su2"/>
</dbReference>
<dbReference type="InterPro" id="IPR007120">
    <property type="entry name" value="DNA-dir_RNAP_su2_dom"/>
</dbReference>
<dbReference type="InterPro" id="IPR037033">
    <property type="entry name" value="DNA-dir_RNAP_su2_hyb_sf"/>
</dbReference>
<dbReference type="InterPro" id="IPR010243">
    <property type="entry name" value="RNA_pol_bsu_bac"/>
</dbReference>
<dbReference type="InterPro" id="IPR007121">
    <property type="entry name" value="RNA_pol_bsu_CS"/>
</dbReference>
<dbReference type="InterPro" id="IPR007642">
    <property type="entry name" value="RNA_pol_Rpb2_2"/>
</dbReference>
<dbReference type="InterPro" id="IPR037034">
    <property type="entry name" value="RNA_pol_Rpb2_2_sf"/>
</dbReference>
<dbReference type="InterPro" id="IPR007645">
    <property type="entry name" value="RNA_pol_Rpb2_3"/>
</dbReference>
<dbReference type="InterPro" id="IPR007641">
    <property type="entry name" value="RNA_pol_Rpb2_7"/>
</dbReference>
<dbReference type="InterPro" id="IPR014724">
    <property type="entry name" value="RNA_pol_RPB2_OB-fold"/>
</dbReference>
<dbReference type="NCBIfam" id="NF001616">
    <property type="entry name" value="PRK00405.1"/>
    <property type="match status" value="1"/>
</dbReference>
<dbReference type="PANTHER" id="PTHR20856">
    <property type="entry name" value="DNA-DIRECTED RNA POLYMERASE I SUBUNIT 2"/>
    <property type="match status" value="1"/>
</dbReference>
<dbReference type="Pfam" id="PF04561">
    <property type="entry name" value="RNA_pol_Rpb2_2"/>
    <property type="match status" value="1"/>
</dbReference>
<dbReference type="Pfam" id="PF04565">
    <property type="entry name" value="RNA_pol_Rpb2_3"/>
    <property type="match status" value="1"/>
</dbReference>
<dbReference type="Pfam" id="PF00562">
    <property type="entry name" value="RNA_pol_Rpb2_6"/>
    <property type="match status" value="1"/>
</dbReference>
<dbReference type="Pfam" id="PF04560">
    <property type="entry name" value="RNA_pol_Rpb2_7"/>
    <property type="match status" value="1"/>
</dbReference>
<dbReference type="SUPFAM" id="SSF64484">
    <property type="entry name" value="beta and beta-prime subunits of DNA dependent RNA-polymerase"/>
    <property type="match status" value="1"/>
</dbReference>
<dbReference type="PROSITE" id="PS01166">
    <property type="entry name" value="RNA_POL_BETA"/>
    <property type="match status" value="1"/>
</dbReference>
<reference key="1">
    <citation type="journal article" date="2003" name="DNA Res.">
        <title>Complete nucleotide sequence of the chloroplast genome from a leptosporangiate fern, Adiantum capillus-veneris L.</title>
        <authorList>
            <person name="Wolf P.G."/>
            <person name="Rowe C.A."/>
            <person name="Sinclair R.B."/>
            <person name="Hasebe M."/>
        </authorList>
    </citation>
    <scope>NUCLEOTIDE SEQUENCE [LARGE SCALE GENOMIC DNA]</scope>
</reference>
<reference key="2">
    <citation type="journal article" date="2004" name="Gene">
        <title>High levels of RNA editing in a vascular plant chloroplast genome: analysis of transcripts from the fern Adiantum capillus-veneris.</title>
        <authorList>
            <person name="Wolf P.G."/>
            <person name="Rowe C.A."/>
            <person name="Hasebe M."/>
        </authorList>
    </citation>
    <scope>NUCLEOTIDE SEQUENCE [GENOMIC DNA]</scope>
    <scope>RNA EDITING</scope>
    <source>
        <tissue>Frond</tissue>
    </source>
</reference>
<gene>
    <name evidence="1" type="primary">rpoB</name>
</gene>